<reference key="1">
    <citation type="journal article" date="1995" name="Plant Mol. Biol.">
        <title>Several distinct genes encode nearly identical to 16 kDa proteolipids of the vacuolar H(+)-ATPase from Arabidopsis thaliana.</title>
        <authorList>
            <person name="Perera I.Y."/>
            <person name="Li X."/>
            <person name="Sze H."/>
        </authorList>
    </citation>
    <scope>NUCLEOTIDE SEQUENCE [GENOMIC DNA]</scope>
    <scope>TISSUE SPECIFICITY</scope>
    <source>
        <strain>cv. Columbia</strain>
    </source>
</reference>
<reference key="2">
    <citation type="journal article" date="1999" name="Nature">
        <title>Sequence and analysis of chromosome 4 of the plant Arabidopsis thaliana.</title>
        <authorList>
            <person name="Mayer K.F.X."/>
            <person name="Schueller C."/>
            <person name="Wambutt R."/>
            <person name="Murphy G."/>
            <person name="Volckaert G."/>
            <person name="Pohl T."/>
            <person name="Duesterhoeft A."/>
            <person name="Stiekema W."/>
            <person name="Entian K.-D."/>
            <person name="Terryn N."/>
            <person name="Harris B."/>
            <person name="Ansorge W."/>
            <person name="Brandt P."/>
            <person name="Grivell L.A."/>
            <person name="Rieger M."/>
            <person name="Weichselgartner M."/>
            <person name="de Simone V."/>
            <person name="Obermaier B."/>
            <person name="Mache R."/>
            <person name="Mueller M."/>
            <person name="Kreis M."/>
            <person name="Delseny M."/>
            <person name="Puigdomenech P."/>
            <person name="Watson M."/>
            <person name="Schmidtheini T."/>
            <person name="Reichert B."/>
            <person name="Portetelle D."/>
            <person name="Perez-Alonso M."/>
            <person name="Boutry M."/>
            <person name="Bancroft I."/>
            <person name="Vos P."/>
            <person name="Hoheisel J."/>
            <person name="Zimmermann W."/>
            <person name="Wedler H."/>
            <person name="Ridley P."/>
            <person name="Langham S.-A."/>
            <person name="McCullagh B."/>
            <person name="Bilham L."/>
            <person name="Robben J."/>
            <person name="van der Schueren J."/>
            <person name="Grymonprez B."/>
            <person name="Chuang Y.-J."/>
            <person name="Vandenbussche F."/>
            <person name="Braeken M."/>
            <person name="Weltjens I."/>
            <person name="Voet M."/>
            <person name="Bastiaens I."/>
            <person name="Aert R."/>
            <person name="Defoor E."/>
            <person name="Weitzenegger T."/>
            <person name="Bothe G."/>
            <person name="Ramsperger U."/>
            <person name="Hilbert H."/>
            <person name="Braun M."/>
            <person name="Holzer E."/>
            <person name="Brandt A."/>
            <person name="Peters S."/>
            <person name="van Staveren M."/>
            <person name="Dirkse W."/>
            <person name="Mooijman P."/>
            <person name="Klein Lankhorst R."/>
            <person name="Rose M."/>
            <person name="Hauf J."/>
            <person name="Koetter P."/>
            <person name="Berneiser S."/>
            <person name="Hempel S."/>
            <person name="Feldpausch M."/>
            <person name="Lamberth S."/>
            <person name="Van den Daele H."/>
            <person name="De Keyser A."/>
            <person name="Buysshaert C."/>
            <person name="Gielen J."/>
            <person name="Villarroel R."/>
            <person name="De Clercq R."/>
            <person name="van Montagu M."/>
            <person name="Rogers J."/>
            <person name="Cronin A."/>
            <person name="Quail M.A."/>
            <person name="Bray-Allen S."/>
            <person name="Clark L."/>
            <person name="Doggett J."/>
            <person name="Hall S."/>
            <person name="Kay M."/>
            <person name="Lennard N."/>
            <person name="McLay K."/>
            <person name="Mayes R."/>
            <person name="Pettett A."/>
            <person name="Rajandream M.A."/>
            <person name="Lyne M."/>
            <person name="Benes V."/>
            <person name="Rechmann S."/>
            <person name="Borkova D."/>
            <person name="Bloecker H."/>
            <person name="Scharfe M."/>
            <person name="Grimm M."/>
            <person name="Loehnert T.-H."/>
            <person name="Dose S."/>
            <person name="de Haan M."/>
            <person name="Maarse A.C."/>
            <person name="Schaefer M."/>
            <person name="Mueller-Auer S."/>
            <person name="Gabel C."/>
            <person name="Fuchs M."/>
            <person name="Fartmann B."/>
            <person name="Granderath K."/>
            <person name="Dauner D."/>
            <person name="Herzl A."/>
            <person name="Neumann S."/>
            <person name="Argiriou A."/>
            <person name="Vitale D."/>
            <person name="Liguori R."/>
            <person name="Piravandi E."/>
            <person name="Massenet O."/>
            <person name="Quigley F."/>
            <person name="Clabauld G."/>
            <person name="Muendlein A."/>
            <person name="Felber R."/>
            <person name="Schnabl S."/>
            <person name="Hiller R."/>
            <person name="Schmidt W."/>
            <person name="Lecharny A."/>
            <person name="Aubourg S."/>
            <person name="Chefdor F."/>
            <person name="Cooke R."/>
            <person name="Berger C."/>
            <person name="Monfort A."/>
            <person name="Casacuberta E."/>
            <person name="Gibbons T."/>
            <person name="Weber N."/>
            <person name="Vandenbol M."/>
            <person name="Bargues M."/>
            <person name="Terol J."/>
            <person name="Torres A."/>
            <person name="Perez-Perez A."/>
            <person name="Purnelle B."/>
            <person name="Bent E."/>
            <person name="Johnson S."/>
            <person name="Tacon D."/>
            <person name="Jesse T."/>
            <person name="Heijnen L."/>
            <person name="Schwarz S."/>
            <person name="Scholler P."/>
            <person name="Heber S."/>
            <person name="Francs P."/>
            <person name="Bielke C."/>
            <person name="Frishman D."/>
            <person name="Haase D."/>
            <person name="Lemcke K."/>
            <person name="Mewes H.-W."/>
            <person name="Stocker S."/>
            <person name="Zaccaria P."/>
            <person name="Bevan M."/>
            <person name="Wilson R.K."/>
            <person name="de la Bastide M."/>
            <person name="Habermann K."/>
            <person name="Parnell L."/>
            <person name="Dedhia N."/>
            <person name="Gnoj L."/>
            <person name="Schutz K."/>
            <person name="Huang E."/>
            <person name="Spiegel L."/>
            <person name="Sekhon M."/>
            <person name="Murray J."/>
            <person name="Sheet P."/>
            <person name="Cordes M."/>
            <person name="Abu-Threideh J."/>
            <person name="Stoneking T."/>
            <person name="Kalicki J."/>
            <person name="Graves T."/>
            <person name="Harmon G."/>
            <person name="Edwards J."/>
            <person name="Latreille P."/>
            <person name="Courtney L."/>
            <person name="Cloud J."/>
            <person name="Abbott A."/>
            <person name="Scott K."/>
            <person name="Johnson D."/>
            <person name="Minx P."/>
            <person name="Bentley D."/>
            <person name="Fulton B."/>
            <person name="Miller N."/>
            <person name="Greco T."/>
            <person name="Kemp K."/>
            <person name="Kramer J."/>
            <person name="Fulton L."/>
            <person name="Mardis E."/>
            <person name="Dante M."/>
            <person name="Pepin K."/>
            <person name="Hillier L.W."/>
            <person name="Nelson J."/>
            <person name="Spieth J."/>
            <person name="Ryan E."/>
            <person name="Andrews S."/>
            <person name="Geisel C."/>
            <person name="Layman D."/>
            <person name="Du H."/>
            <person name="Ali J."/>
            <person name="Berghoff A."/>
            <person name="Jones K."/>
            <person name="Drone K."/>
            <person name="Cotton M."/>
            <person name="Joshu C."/>
            <person name="Antonoiu B."/>
            <person name="Zidanic M."/>
            <person name="Strong C."/>
            <person name="Sun H."/>
            <person name="Lamar B."/>
            <person name="Yordan C."/>
            <person name="Ma P."/>
            <person name="Zhong J."/>
            <person name="Preston R."/>
            <person name="Vil D."/>
            <person name="Shekher M."/>
            <person name="Matero A."/>
            <person name="Shah R."/>
            <person name="Swaby I.K."/>
            <person name="O'Shaughnessy A."/>
            <person name="Rodriguez M."/>
            <person name="Hoffman J."/>
            <person name="Till S."/>
            <person name="Granat S."/>
            <person name="Shohdy N."/>
            <person name="Hasegawa A."/>
            <person name="Hameed A."/>
            <person name="Lodhi M."/>
            <person name="Johnson A."/>
            <person name="Chen E."/>
            <person name="Marra M.A."/>
            <person name="Martienssen R."/>
            <person name="McCombie W.R."/>
        </authorList>
    </citation>
    <scope>NUCLEOTIDE SEQUENCE [LARGE SCALE GENOMIC DNA]</scope>
    <source>
        <strain>cv. Columbia</strain>
    </source>
</reference>
<reference key="3">
    <citation type="journal article" date="2017" name="Plant J.">
        <title>Araport11: a complete reannotation of the Arabidopsis thaliana reference genome.</title>
        <authorList>
            <person name="Cheng C.Y."/>
            <person name="Krishnakumar V."/>
            <person name="Chan A.P."/>
            <person name="Thibaud-Nissen F."/>
            <person name="Schobel S."/>
            <person name="Town C.D."/>
        </authorList>
    </citation>
    <scope>GENOME REANNOTATION</scope>
    <source>
        <strain>cv. Columbia</strain>
    </source>
</reference>
<reference key="4">
    <citation type="journal article" date="2003" name="Science">
        <title>Empirical analysis of transcriptional activity in the Arabidopsis genome.</title>
        <authorList>
            <person name="Yamada K."/>
            <person name="Lim J."/>
            <person name="Dale J.M."/>
            <person name="Chen H."/>
            <person name="Shinn P."/>
            <person name="Palm C.J."/>
            <person name="Southwick A.M."/>
            <person name="Wu H.C."/>
            <person name="Kim C.J."/>
            <person name="Nguyen M."/>
            <person name="Pham P.K."/>
            <person name="Cheuk R.F."/>
            <person name="Karlin-Newmann G."/>
            <person name="Liu S.X."/>
            <person name="Lam B."/>
            <person name="Sakano H."/>
            <person name="Wu T."/>
            <person name="Yu G."/>
            <person name="Miranda M."/>
            <person name="Quach H.L."/>
            <person name="Tripp M."/>
            <person name="Chang C.H."/>
            <person name="Lee J.M."/>
            <person name="Toriumi M.J."/>
            <person name="Chan M.M."/>
            <person name="Tang C.C."/>
            <person name="Onodera C.S."/>
            <person name="Deng J.M."/>
            <person name="Akiyama K."/>
            <person name="Ansari Y."/>
            <person name="Arakawa T."/>
            <person name="Banh J."/>
            <person name="Banno F."/>
            <person name="Bowser L."/>
            <person name="Brooks S.Y."/>
            <person name="Carninci P."/>
            <person name="Chao Q."/>
            <person name="Choy N."/>
            <person name="Enju A."/>
            <person name="Goldsmith A.D."/>
            <person name="Gurjal M."/>
            <person name="Hansen N.F."/>
            <person name="Hayashizaki Y."/>
            <person name="Johnson-Hopson C."/>
            <person name="Hsuan V.W."/>
            <person name="Iida K."/>
            <person name="Karnes M."/>
            <person name="Khan S."/>
            <person name="Koesema E."/>
            <person name="Ishida J."/>
            <person name="Jiang P.X."/>
            <person name="Jones T."/>
            <person name="Kawai J."/>
            <person name="Kamiya A."/>
            <person name="Meyers C."/>
            <person name="Nakajima M."/>
            <person name="Narusaka M."/>
            <person name="Seki M."/>
            <person name="Sakurai T."/>
            <person name="Satou M."/>
            <person name="Tamse R."/>
            <person name="Vaysberg M."/>
            <person name="Wallender E.K."/>
            <person name="Wong C."/>
            <person name="Yamamura Y."/>
            <person name="Yuan S."/>
            <person name="Shinozaki K."/>
            <person name="Davis R.W."/>
            <person name="Theologis A."/>
            <person name="Ecker J.R."/>
        </authorList>
    </citation>
    <scope>NUCLEOTIDE SEQUENCE [LARGE SCALE MRNA]</scope>
    <source>
        <strain>cv. Columbia</strain>
    </source>
</reference>
<reference key="5">
    <citation type="submission" date="2002-03" db="EMBL/GenBank/DDBJ databases">
        <title>Full-length cDNA from Arabidopsis thaliana.</title>
        <authorList>
            <person name="Brover V.V."/>
            <person name="Troukhan M.E."/>
            <person name="Alexandrov N.A."/>
            <person name="Lu Y.-P."/>
            <person name="Flavell R.B."/>
            <person name="Feldmann K.A."/>
        </authorList>
    </citation>
    <scope>NUCLEOTIDE SEQUENCE [LARGE SCALE MRNA]</scope>
</reference>
<reference key="6">
    <citation type="journal article" date="2002" name="Trends Plant Sci.">
        <title>A simple nomenclature for a complex proton pump: VHA genes encode the vacuolar H(+)-ATPase.</title>
        <authorList>
            <person name="Sze H."/>
            <person name="Schumacher K."/>
            <person name="Mueller M.L."/>
            <person name="Padmanaban S."/>
            <person name="Taiz L."/>
        </authorList>
    </citation>
    <scope>GENE FAMILY</scope>
    <scope>NOMENCLATURE</scope>
</reference>
<reference key="7">
    <citation type="journal article" date="2008" name="BMC Cell Biol.">
        <title>Organelle-specific isoenzymes of plant V-ATPase as revealed by in vivo-FRET analysis.</title>
        <authorList>
            <person name="Seidel T."/>
            <person name="Schnitzer D."/>
            <person name="Golldack D."/>
            <person name="Sauer M."/>
            <person name="Dietz K.J."/>
        </authorList>
    </citation>
    <scope>TISSUE SPECIFICITY</scope>
    <scope>SUBCELLULAR LOCATION</scope>
    <scope>TOPOLOGY</scope>
</reference>
<feature type="chain" id="PRO_0000415775" description="V-type proton ATPase subunit c3">
    <location>
        <begin position="1"/>
        <end position="164"/>
    </location>
</feature>
<feature type="topological domain" description="Lumenal" evidence="2">
    <location>
        <begin position="1"/>
        <end position="11"/>
    </location>
</feature>
<feature type="transmembrane region" description="Helical" evidence="2">
    <location>
        <begin position="12"/>
        <end position="32"/>
    </location>
</feature>
<feature type="topological domain" description="Cytoplasmic" evidence="2">
    <location>
        <begin position="33"/>
        <end position="54"/>
    </location>
</feature>
<feature type="transmembrane region" description="Helical" evidence="2">
    <location>
        <begin position="55"/>
        <end position="75"/>
    </location>
</feature>
<feature type="topological domain" description="Lumenal" evidence="2">
    <location>
        <begin position="76"/>
        <end position="94"/>
    </location>
</feature>
<feature type="transmembrane region" description="Helical" evidence="2">
    <location>
        <begin position="95"/>
        <end position="116"/>
    </location>
</feature>
<feature type="topological domain" description="Cytoplasmic" evidence="2">
    <location>
        <begin position="117"/>
        <end position="128"/>
    </location>
</feature>
<feature type="transmembrane region" description="Helical" evidence="2">
    <location>
        <begin position="129"/>
        <end position="154"/>
    </location>
</feature>
<feature type="topological domain" description="Lumenal" evidence="2">
    <location>
        <begin position="155"/>
        <end position="164"/>
    </location>
</feature>
<feature type="site" description="Essential for proton translocation" evidence="1">
    <location>
        <position position="141"/>
    </location>
</feature>
<gene>
    <name type="primary">VHA-c3</name>
    <name type="synonym">AVA-P3</name>
    <name type="synonym">AVAP3</name>
    <name type="ordered locus">At4g38920</name>
    <name type="ORF">F19H22.20</name>
</gene>
<comment type="function">
    <text>Proton-conducting pore forming subunit of the membrane integral V0 complex of vacuolar ATPase. V-ATPase is responsible for acidifying a variety of intracellular compartments in eukaryotic cells.</text>
</comment>
<comment type="subunit">
    <text>V-ATPase is a heteromultimeric enzyme composed of a peripheral catalytic V1 complex (components A to H) attached to an integral membrane V0 proton pore complex (components: a, c, c'', d and e). The proteolipid components c and c'' are present as a hexameric ring that forms the proton-conducting pore.</text>
</comment>
<comment type="subcellular location">
    <subcellularLocation>
        <location evidence="3">Vacuole membrane</location>
        <topology evidence="3">Multi-pass membrane protein</topology>
    </subcellularLocation>
    <text>Tonoplast.</text>
</comment>
<comment type="tissue specificity">
    <text evidence="3 4">Expressed in leaf, root, flower and silique.</text>
</comment>
<comment type="similarity">
    <text evidence="5">Belongs to the V-ATPase proteolipid subunit family.</text>
</comment>
<sequence>MSTFSGDETAPFFGFLGAAAALVFSCMGAAYGTAKSGVGVASMGVMRPELVMKSIVPVVMAGVLGIYGLIIAVIISTGINPKAKSYYLFDGYAHLSSGLACGLAGLSAGMAIGIVGDAGVRANAQQPKLFVGMILILIFAEALALYGLIVGIILSSRAGQSRAE</sequence>
<evidence type="ECO:0000250" key="1"/>
<evidence type="ECO:0000255" key="2"/>
<evidence type="ECO:0000269" key="3">
    <source>
    </source>
</evidence>
<evidence type="ECO:0000269" key="4">
    <source>
    </source>
</evidence>
<evidence type="ECO:0000305" key="5"/>
<accession>P0DH93</accession>
<accession>P59227</accession>
<accession>Q39037</accession>
<accession>Q39038</accession>
<accession>Q39039</accession>
<accession>Q42424</accession>
<accession>Q96298</accession>
<protein>
    <recommendedName>
        <fullName>V-type proton ATPase subunit c3</fullName>
        <shortName>V-ATPase subunit c3</shortName>
    </recommendedName>
    <alternativeName>
        <fullName>V-type proton ATPase 16 kDa proteolipid subunit c3</fullName>
        <shortName>V-ATPase 16 kDa proteolipid subunit c3</shortName>
    </alternativeName>
    <alternativeName>
        <fullName>Vacuolar H(+)-ATPase subunit c isoform 3</fullName>
    </alternativeName>
    <alternativeName>
        <fullName>Vacuolar proton pump 16 kDa proteolipid subunit c3</fullName>
    </alternativeName>
    <alternativeName>
        <fullName>Vacuolar proton pump subunit c3</fullName>
    </alternativeName>
</protein>
<organism>
    <name type="scientific">Arabidopsis thaliana</name>
    <name type="common">Mouse-ear cress</name>
    <dbReference type="NCBI Taxonomy" id="3702"/>
    <lineage>
        <taxon>Eukaryota</taxon>
        <taxon>Viridiplantae</taxon>
        <taxon>Streptophyta</taxon>
        <taxon>Embryophyta</taxon>
        <taxon>Tracheophyta</taxon>
        <taxon>Spermatophyta</taxon>
        <taxon>Magnoliopsida</taxon>
        <taxon>eudicotyledons</taxon>
        <taxon>Gunneridae</taxon>
        <taxon>Pentapetalae</taxon>
        <taxon>rosids</taxon>
        <taxon>malvids</taxon>
        <taxon>Brassicales</taxon>
        <taxon>Brassicaceae</taxon>
        <taxon>Camelineae</taxon>
        <taxon>Arabidopsis</taxon>
    </lineage>
</organism>
<proteinExistence type="evidence at protein level"/>
<keyword id="KW-0375">Hydrogen ion transport</keyword>
<keyword id="KW-0406">Ion transport</keyword>
<keyword id="KW-0472">Membrane</keyword>
<keyword id="KW-1185">Reference proteome</keyword>
<keyword id="KW-0812">Transmembrane</keyword>
<keyword id="KW-1133">Transmembrane helix</keyword>
<keyword id="KW-0813">Transport</keyword>
<keyword id="KW-0926">Vacuole</keyword>
<dbReference type="EMBL" id="L44583">
    <property type="protein sequence ID" value="AAA99935.1"/>
    <property type="molecule type" value="Genomic_DNA"/>
</dbReference>
<dbReference type="EMBL" id="AL035679">
    <property type="protein sequence ID" value="CAB38812.1"/>
    <property type="molecule type" value="Genomic_DNA"/>
</dbReference>
<dbReference type="EMBL" id="AL161594">
    <property type="protein sequence ID" value="CAB80555.1"/>
    <property type="molecule type" value="Genomic_DNA"/>
</dbReference>
<dbReference type="EMBL" id="CP002687">
    <property type="protein sequence ID" value="AEE86993.1"/>
    <property type="molecule type" value="Genomic_DNA"/>
</dbReference>
<dbReference type="EMBL" id="AF412097">
    <property type="protein sequence ID" value="AAL06550.1"/>
    <property type="molecule type" value="mRNA"/>
</dbReference>
<dbReference type="EMBL" id="AY049249">
    <property type="protein sequence ID" value="AAK83591.1"/>
    <property type="molecule type" value="mRNA"/>
</dbReference>
<dbReference type="EMBL" id="AY059836">
    <property type="protein sequence ID" value="AAL24318.1"/>
    <property type="molecule type" value="mRNA"/>
</dbReference>
<dbReference type="EMBL" id="AY090271">
    <property type="protein sequence ID" value="AAL90932.1"/>
    <property type="molecule type" value="mRNA"/>
</dbReference>
<dbReference type="EMBL" id="AY093249">
    <property type="protein sequence ID" value="AAM13248.1"/>
    <property type="molecule type" value="mRNA"/>
</dbReference>
<dbReference type="EMBL" id="AY087112">
    <property type="protein sequence ID" value="AAM64670.1"/>
    <property type="molecule type" value="mRNA"/>
</dbReference>
<dbReference type="PIR" id="S60130">
    <property type="entry name" value="S60130"/>
</dbReference>
<dbReference type="RefSeq" id="NP_179244.1">
    <property type="nucleotide sequence ID" value="NM_127205.5"/>
</dbReference>
<dbReference type="RefSeq" id="NP_195603.1">
    <property type="nucleotide sequence ID" value="NM_120052.3"/>
</dbReference>
<dbReference type="SMR" id="P0DH93"/>
<dbReference type="BioGRID" id="14906">
    <property type="interactions" value="2"/>
</dbReference>
<dbReference type="BioGRID" id="15327">
    <property type="interactions" value="4"/>
</dbReference>
<dbReference type="FunCoup" id="P0DH93">
    <property type="interactions" value="2571"/>
</dbReference>
<dbReference type="STRING" id="3702.P0DH93"/>
<dbReference type="EnsemblPlants" id="AT2G16510.1">
    <property type="protein sequence ID" value="AT2G16510.1"/>
    <property type="gene ID" value="AT2G16510"/>
</dbReference>
<dbReference type="EnsemblPlants" id="AT4G34720.1">
    <property type="protein sequence ID" value="AT4G34720.1"/>
    <property type="gene ID" value="AT4G34720"/>
</dbReference>
<dbReference type="EnsemblPlants" id="AT4G38920.1">
    <property type="protein sequence ID" value="AT4G38920.1"/>
    <property type="gene ID" value="AT4G38920"/>
</dbReference>
<dbReference type="GeneID" id="830047"/>
<dbReference type="Gramene" id="AT2G16510.1">
    <property type="protein sequence ID" value="AT2G16510.1"/>
    <property type="gene ID" value="AT2G16510"/>
</dbReference>
<dbReference type="Gramene" id="AT4G34720.1">
    <property type="protein sequence ID" value="AT4G34720.1"/>
    <property type="gene ID" value="AT4G34720"/>
</dbReference>
<dbReference type="Gramene" id="AT4G38920.1">
    <property type="protein sequence ID" value="AT4G38920.1"/>
    <property type="gene ID" value="AT4G38920"/>
</dbReference>
<dbReference type="KEGG" id="ath:AT2G16510"/>
<dbReference type="KEGG" id="ath:AT4G34720"/>
<dbReference type="KEGG" id="ath:AT4G38920"/>
<dbReference type="Araport" id="AT4G38920"/>
<dbReference type="TAIR" id="AT4G38920">
    <property type="gene designation" value="VHA-C3"/>
</dbReference>
<dbReference type="HOGENOM" id="CLU_085752_1_0_1"/>
<dbReference type="InParanoid" id="P0DH93"/>
<dbReference type="OMA" id="MGVMKPD"/>
<dbReference type="OrthoDB" id="1106591at2759"/>
<dbReference type="PhylomeDB" id="P0DH93"/>
<dbReference type="PRO" id="PR:P0DH93"/>
<dbReference type="Proteomes" id="UP000006548">
    <property type="component" value="Chromosome 4"/>
</dbReference>
<dbReference type="ExpressionAtlas" id="P0DH93">
    <property type="expression patterns" value="baseline and differential"/>
</dbReference>
<dbReference type="GO" id="GO:0000325">
    <property type="term" value="C:plant-type vacuole"/>
    <property type="evidence" value="ECO:0007005"/>
    <property type="project" value="TAIR"/>
</dbReference>
<dbReference type="GO" id="GO:0033179">
    <property type="term" value="C:proton-transporting V-type ATPase, V0 domain"/>
    <property type="evidence" value="ECO:0007669"/>
    <property type="project" value="InterPro"/>
</dbReference>
<dbReference type="GO" id="GO:0005774">
    <property type="term" value="C:vacuolar membrane"/>
    <property type="evidence" value="ECO:0007669"/>
    <property type="project" value="UniProtKB-SubCell"/>
</dbReference>
<dbReference type="GO" id="GO:0005773">
    <property type="term" value="C:vacuole"/>
    <property type="evidence" value="ECO:0007005"/>
    <property type="project" value="TAIR"/>
</dbReference>
<dbReference type="GO" id="GO:0046961">
    <property type="term" value="F:proton-transporting ATPase activity, rotational mechanism"/>
    <property type="evidence" value="ECO:0007669"/>
    <property type="project" value="InterPro"/>
</dbReference>
<dbReference type="CDD" id="cd18175">
    <property type="entry name" value="ATP-synt_Vo_c_ATP6C_rpt1"/>
    <property type="match status" value="1"/>
</dbReference>
<dbReference type="CDD" id="cd18176">
    <property type="entry name" value="ATP-synt_Vo_c_ATP6C_rpt2"/>
    <property type="match status" value="1"/>
</dbReference>
<dbReference type="FunFam" id="1.20.120.610:FF:000003">
    <property type="entry name" value="V-type proton ATPase proteolipid subunit"/>
    <property type="match status" value="1"/>
</dbReference>
<dbReference type="Gene3D" id="1.20.120.610">
    <property type="entry name" value="lithium bound rotor ring of v- atpase"/>
    <property type="match status" value="1"/>
</dbReference>
<dbReference type="InterPro" id="IPR002379">
    <property type="entry name" value="ATPase_proteolipid_c-like_dom"/>
</dbReference>
<dbReference type="InterPro" id="IPR000245">
    <property type="entry name" value="ATPase_proteolipid_csu"/>
</dbReference>
<dbReference type="InterPro" id="IPR011555">
    <property type="entry name" value="ATPase_proteolipid_su_C_euk"/>
</dbReference>
<dbReference type="InterPro" id="IPR035921">
    <property type="entry name" value="F/V-ATP_Csub_sf"/>
</dbReference>
<dbReference type="NCBIfam" id="TIGR01100">
    <property type="entry name" value="V_ATP_synt_C"/>
    <property type="match status" value="1"/>
</dbReference>
<dbReference type="PANTHER" id="PTHR10263">
    <property type="entry name" value="V-TYPE PROTON ATPASE PROTEOLIPID SUBUNIT"/>
    <property type="match status" value="1"/>
</dbReference>
<dbReference type="Pfam" id="PF00137">
    <property type="entry name" value="ATP-synt_C"/>
    <property type="match status" value="2"/>
</dbReference>
<dbReference type="PRINTS" id="PR00122">
    <property type="entry name" value="VACATPASE"/>
</dbReference>
<dbReference type="SUPFAM" id="SSF81333">
    <property type="entry name" value="F1F0 ATP synthase subunit C"/>
    <property type="match status" value="2"/>
</dbReference>
<name>VATL3_ARATH</name>